<feature type="chain" id="PRO_1000129188" description="Succinate--CoA ligase [ADP-forming] subunit beta">
    <location>
        <begin position="1"/>
        <end position="388"/>
    </location>
</feature>
<feature type="domain" description="ATP-grasp" evidence="1">
    <location>
        <begin position="9"/>
        <end position="244"/>
    </location>
</feature>
<feature type="binding site" evidence="1">
    <location>
        <position position="46"/>
    </location>
    <ligand>
        <name>ATP</name>
        <dbReference type="ChEBI" id="CHEBI:30616"/>
    </ligand>
</feature>
<feature type="binding site" evidence="1">
    <location>
        <begin position="53"/>
        <end position="55"/>
    </location>
    <ligand>
        <name>ATP</name>
        <dbReference type="ChEBI" id="CHEBI:30616"/>
    </ligand>
</feature>
<feature type="binding site" evidence="1">
    <location>
        <position position="99"/>
    </location>
    <ligand>
        <name>ATP</name>
        <dbReference type="ChEBI" id="CHEBI:30616"/>
    </ligand>
</feature>
<feature type="binding site" evidence="1">
    <location>
        <position position="102"/>
    </location>
    <ligand>
        <name>ATP</name>
        <dbReference type="ChEBI" id="CHEBI:30616"/>
    </ligand>
</feature>
<feature type="binding site" evidence="1">
    <location>
        <position position="107"/>
    </location>
    <ligand>
        <name>ATP</name>
        <dbReference type="ChEBI" id="CHEBI:30616"/>
    </ligand>
</feature>
<feature type="binding site" evidence="1">
    <location>
        <position position="199"/>
    </location>
    <ligand>
        <name>Mg(2+)</name>
        <dbReference type="ChEBI" id="CHEBI:18420"/>
    </ligand>
</feature>
<feature type="binding site" evidence="1">
    <location>
        <position position="213"/>
    </location>
    <ligand>
        <name>Mg(2+)</name>
        <dbReference type="ChEBI" id="CHEBI:18420"/>
    </ligand>
</feature>
<feature type="binding site" evidence="1">
    <location>
        <position position="264"/>
    </location>
    <ligand>
        <name>substrate</name>
        <note>ligand shared with subunit alpha</note>
    </ligand>
</feature>
<feature type="binding site" evidence="1">
    <location>
        <begin position="321"/>
        <end position="323"/>
    </location>
    <ligand>
        <name>substrate</name>
        <note>ligand shared with subunit alpha</note>
    </ligand>
</feature>
<name>SUCC_ECOSM</name>
<comment type="function">
    <text evidence="1">Succinyl-CoA synthetase functions in the citric acid cycle (TCA), coupling the hydrolysis of succinyl-CoA to the synthesis of either ATP or GTP and thus represents the only step of substrate-level phosphorylation in the TCA. The beta subunit provides nucleotide specificity of the enzyme and binds the substrate succinate, while the binding sites for coenzyme A and phosphate are found in the alpha subunit.</text>
</comment>
<comment type="catalytic activity">
    <reaction evidence="1">
        <text>succinate + ATP + CoA = succinyl-CoA + ADP + phosphate</text>
        <dbReference type="Rhea" id="RHEA:17661"/>
        <dbReference type="ChEBI" id="CHEBI:30031"/>
        <dbReference type="ChEBI" id="CHEBI:30616"/>
        <dbReference type="ChEBI" id="CHEBI:43474"/>
        <dbReference type="ChEBI" id="CHEBI:57287"/>
        <dbReference type="ChEBI" id="CHEBI:57292"/>
        <dbReference type="ChEBI" id="CHEBI:456216"/>
        <dbReference type="EC" id="6.2.1.5"/>
    </reaction>
    <physiologicalReaction direction="right-to-left" evidence="1">
        <dbReference type="Rhea" id="RHEA:17663"/>
    </physiologicalReaction>
</comment>
<comment type="catalytic activity">
    <reaction evidence="1">
        <text>GTP + succinate + CoA = succinyl-CoA + GDP + phosphate</text>
        <dbReference type="Rhea" id="RHEA:22120"/>
        <dbReference type="ChEBI" id="CHEBI:30031"/>
        <dbReference type="ChEBI" id="CHEBI:37565"/>
        <dbReference type="ChEBI" id="CHEBI:43474"/>
        <dbReference type="ChEBI" id="CHEBI:57287"/>
        <dbReference type="ChEBI" id="CHEBI:57292"/>
        <dbReference type="ChEBI" id="CHEBI:58189"/>
    </reaction>
    <physiologicalReaction direction="right-to-left" evidence="1">
        <dbReference type="Rhea" id="RHEA:22122"/>
    </physiologicalReaction>
</comment>
<comment type="cofactor">
    <cofactor evidence="1">
        <name>Mg(2+)</name>
        <dbReference type="ChEBI" id="CHEBI:18420"/>
    </cofactor>
    <text evidence="1">Binds 1 Mg(2+) ion per subunit.</text>
</comment>
<comment type="pathway">
    <text evidence="1">Carbohydrate metabolism; tricarboxylic acid cycle; succinate from succinyl-CoA (ligase route): step 1/1.</text>
</comment>
<comment type="subunit">
    <text evidence="1">Heterotetramer of two alpha and two beta subunits.</text>
</comment>
<comment type="similarity">
    <text evidence="1">Belongs to the succinate/malate CoA ligase beta subunit family.</text>
</comment>
<proteinExistence type="inferred from homology"/>
<reference key="1">
    <citation type="journal article" date="2008" name="J. Bacteriol.">
        <title>Insights into the environmental resistance gene pool from the genome sequence of the multidrug-resistant environmental isolate Escherichia coli SMS-3-5.</title>
        <authorList>
            <person name="Fricke W.F."/>
            <person name="Wright M.S."/>
            <person name="Lindell A.H."/>
            <person name="Harkins D.M."/>
            <person name="Baker-Austin C."/>
            <person name="Ravel J."/>
            <person name="Stepanauskas R."/>
        </authorList>
    </citation>
    <scope>NUCLEOTIDE SEQUENCE [LARGE SCALE GENOMIC DNA]</scope>
    <source>
        <strain>SMS-3-5 / SECEC</strain>
    </source>
</reference>
<dbReference type="EC" id="6.2.1.5" evidence="1"/>
<dbReference type="EMBL" id="CP000970">
    <property type="protein sequence ID" value="ACB19410.1"/>
    <property type="molecule type" value="Genomic_DNA"/>
</dbReference>
<dbReference type="RefSeq" id="WP_001048602.1">
    <property type="nucleotide sequence ID" value="NC_010498.1"/>
</dbReference>
<dbReference type="SMR" id="B1LLG1"/>
<dbReference type="GeneID" id="93776757"/>
<dbReference type="KEGG" id="ecm:EcSMS35_0740"/>
<dbReference type="HOGENOM" id="CLU_037430_4_0_6"/>
<dbReference type="UniPathway" id="UPA00223">
    <property type="reaction ID" value="UER00999"/>
</dbReference>
<dbReference type="Proteomes" id="UP000007011">
    <property type="component" value="Chromosome"/>
</dbReference>
<dbReference type="GO" id="GO:0005829">
    <property type="term" value="C:cytosol"/>
    <property type="evidence" value="ECO:0007669"/>
    <property type="project" value="TreeGrafter"/>
</dbReference>
<dbReference type="GO" id="GO:0042709">
    <property type="term" value="C:succinate-CoA ligase complex"/>
    <property type="evidence" value="ECO:0007669"/>
    <property type="project" value="TreeGrafter"/>
</dbReference>
<dbReference type="GO" id="GO:0005524">
    <property type="term" value="F:ATP binding"/>
    <property type="evidence" value="ECO:0007669"/>
    <property type="project" value="UniProtKB-UniRule"/>
</dbReference>
<dbReference type="GO" id="GO:0000287">
    <property type="term" value="F:magnesium ion binding"/>
    <property type="evidence" value="ECO:0007669"/>
    <property type="project" value="UniProtKB-UniRule"/>
</dbReference>
<dbReference type="GO" id="GO:0004775">
    <property type="term" value="F:succinate-CoA ligase (ADP-forming) activity"/>
    <property type="evidence" value="ECO:0007669"/>
    <property type="project" value="UniProtKB-UniRule"/>
</dbReference>
<dbReference type="GO" id="GO:0004776">
    <property type="term" value="F:succinate-CoA ligase (GDP-forming) activity"/>
    <property type="evidence" value="ECO:0007669"/>
    <property type="project" value="RHEA"/>
</dbReference>
<dbReference type="GO" id="GO:0006104">
    <property type="term" value="P:succinyl-CoA metabolic process"/>
    <property type="evidence" value="ECO:0007669"/>
    <property type="project" value="TreeGrafter"/>
</dbReference>
<dbReference type="GO" id="GO:0006099">
    <property type="term" value="P:tricarboxylic acid cycle"/>
    <property type="evidence" value="ECO:0007669"/>
    <property type="project" value="UniProtKB-UniRule"/>
</dbReference>
<dbReference type="FunFam" id="3.30.1490.20:FF:000002">
    <property type="entry name" value="Succinate--CoA ligase [ADP-forming] subunit beta"/>
    <property type="match status" value="1"/>
</dbReference>
<dbReference type="FunFam" id="3.30.470.20:FF:000002">
    <property type="entry name" value="Succinate--CoA ligase [ADP-forming] subunit beta"/>
    <property type="match status" value="1"/>
</dbReference>
<dbReference type="FunFam" id="3.40.50.261:FF:000001">
    <property type="entry name" value="Succinate--CoA ligase [ADP-forming] subunit beta"/>
    <property type="match status" value="1"/>
</dbReference>
<dbReference type="Gene3D" id="3.30.1490.20">
    <property type="entry name" value="ATP-grasp fold, A domain"/>
    <property type="match status" value="1"/>
</dbReference>
<dbReference type="Gene3D" id="3.30.470.20">
    <property type="entry name" value="ATP-grasp fold, B domain"/>
    <property type="match status" value="1"/>
</dbReference>
<dbReference type="Gene3D" id="3.40.50.261">
    <property type="entry name" value="Succinyl-CoA synthetase domains"/>
    <property type="match status" value="1"/>
</dbReference>
<dbReference type="HAMAP" id="MF_00558">
    <property type="entry name" value="Succ_CoA_beta"/>
    <property type="match status" value="1"/>
</dbReference>
<dbReference type="InterPro" id="IPR011761">
    <property type="entry name" value="ATP-grasp"/>
</dbReference>
<dbReference type="InterPro" id="IPR013650">
    <property type="entry name" value="ATP-grasp_succ-CoA_synth-type"/>
</dbReference>
<dbReference type="InterPro" id="IPR013815">
    <property type="entry name" value="ATP_grasp_subdomain_1"/>
</dbReference>
<dbReference type="InterPro" id="IPR017866">
    <property type="entry name" value="Succ-CoA_synthase_bsu_CS"/>
</dbReference>
<dbReference type="InterPro" id="IPR005811">
    <property type="entry name" value="SUCC_ACL_C"/>
</dbReference>
<dbReference type="InterPro" id="IPR005809">
    <property type="entry name" value="Succ_CoA_ligase-like_bsu"/>
</dbReference>
<dbReference type="InterPro" id="IPR016102">
    <property type="entry name" value="Succinyl-CoA_synth-like"/>
</dbReference>
<dbReference type="NCBIfam" id="NF001913">
    <property type="entry name" value="PRK00696.1"/>
    <property type="match status" value="1"/>
</dbReference>
<dbReference type="NCBIfam" id="TIGR01016">
    <property type="entry name" value="sucCoAbeta"/>
    <property type="match status" value="1"/>
</dbReference>
<dbReference type="PANTHER" id="PTHR11815:SF10">
    <property type="entry name" value="SUCCINATE--COA LIGASE [GDP-FORMING] SUBUNIT BETA, MITOCHONDRIAL"/>
    <property type="match status" value="1"/>
</dbReference>
<dbReference type="PANTHER" id="PTHR11815">
    <property type="entry name" value="SUCCINYL-COA SYNTHETASE BETA CHAIN"/>
    <property type="match status" value="1"/>
</dbReference>
<dbReference type="Pfam" id="PF08442">
    <property type="entry name" value="ATP-grasp_2"/>
    <property type="match status" value="1"/>
</dbReference>
<dbReference type="Pfam" id="PF00549">
    <property type="entry name" value="Ligase_CoA"/>
    <property type="match status" value="1"/>
</dbReference>
<dbReference type="PIRSF" id="PIRSF001554">
    <property type="entry name" value="SucCS_beta"/>
    <property type="match status" value="1"/>
</dbReference>
<dbReference type="SUPFAM" id="SSF56059">
    <property type="entry name" value="Glutathione synthetase ATP-binding domain-like"/>
    <property type="match status" value="1"/>
</dbReference>
<dbReference type="SUPFAM" id="SSF52210">
    <property type="entry name" value="Succinyl-CoA synthetase domains"/>
    <property type="match status" value="1"/>
</dbReference>
<dbReference type="PROSITE" id="PS50975">
    <property type="entry name" value="ATP_GRASP"/>
    <property type="match status" value="1"/>
</dbReference>
<dbReference type="PROSITE" id="PS01217">
    <property type="entry name" value="SUCCINYL_COA_LIG_3"/>
    <property type="match status" value="1"/>
</dbReference>
<sequence>MNLHEYQAKQLFARYGLPAPVGYACTTPREAEEAASKIGAGPWVVKCQVHAGGRGKAGGVKVVNSKEDIRAFAENWLGKRLVTYQTDANGQPVNQILVEAATDIAKELYLGAVVDRSSRRVVFMASTEGGVEIEKVAEETPHLIHKVALDPLTGPMPYQGRELAFKLGLEGKLVQQFTKIFMGLATIFLERDLALIEINPLVITKQGDLICLDGKLGADGNALFRQPDLREMRDQSQEDPREAQAAQWELNYVALDGNIGCMVNGAGLAMGTMDIVKLHGGEPANFLDVGGGATKERVTEAFKIILSDDKVKAVLVNIFGGIVRCDLIADGIIGAVAEVGVNVPVVVRLEGNNAELGAKKLADSGLNIIAAKGLTDAAQQVVAAVEGK</sequence>
<evidence type="ECO:0000255" key="1">
    <source>
        <dbReference type="HAMAP-Rule" id="MF_00558"/>
    </source>
</evidence>
<protein>
    <recommendedName>
        <fullName evidence="1">Succinate--CoA ligase [ADP-forming] subunit beta</fullName>
        <ecNumber evidence="1">6.2.1.5</ecNumber>
    </recommendedName>
    <alternativeName>
        <fullName evidence="1">Succinyl-CoA synthetase subunit beta</fullName>
        <shortName evidence="1">SCS-beta</shortName>
    </alternativeName>
</protein>
<gene>
    <name evidence="1" type="primary">sucC</name>
    <name type="ordered locus">EcSMS35_0740</name>
</gene>
<keyword id="KW-0067">ATP-binding</keyword>
<keyword id="KW-0436">Ligase</keyword>
<keyword id="KW-0460">Magnesium</keyword>
<keyword id="KW-0479">Metal-binding</keyword>
<keyword id="KW-0547">Nucleotide-binding</keyword>
<keyword id="KW-0816">Tricarboxylic acid cycle</keyword>
<organism>
    <name type="scientific">Escherichia coli (strain SMS-3-5 / SECEC)</name>
    <dbReference type="NCBI Taxonomy" id="439855"/>
    <lineage>
        <taxon>Bacteria</taxon>
        <taxon>Pseudomonadati</taxon>
        <taxon>Pseudomonadota</taxon>
        <taxon>Gammaproteobacteria</taxon>
        <taxon>Enterobacterales</taxon>
        <taxon>Enterobacteriaceae</taxon>
        <taxon>Escherichia</taxon>
    </lineage>
</organism>
<accession>B1LLG1</accession>